<evidence type="ECO:0000255" key="1">
    <source>
        <dbReference type="HAMAP-Rule" id="MF_01398"/>
    </source>
</evidence>
<gene>
    <name evidence="1" type="primary">atpF</name>
    <name type="ordered locus">PMM1453</name>
</gene>
<name>ATPF_PROMP</name>
<reference key="1">
    <citation type="journal article" date="2003" name="Nature">
        <title>Genome divergence in two Prochlorococcus ecotypes reflects oceanic niche differentiation.</title>
        <authorList>
            <person name="Rocap G."/>
            <person name="Larimer F.W."/>
            <person name="Lamerdin J.E."/>
            <person name="Malfatti S."/>
            <person name="Chain P."/>
            <person name="Ahlgren N.A."/>
            <person name="Arellano A."/>
            <person name="Coleman M."/>
            <person name="Hauser L."/>
            <person name="Hess W.R."/>
            <person name="Johnson Z.I."/>
            <person name="Land M.L."/>
            <person name="Lindell D."/>
            <person name="Post A.F."/>
            <person name="Regala W."/>
            <person name="Shah M."/>
            <person name="Shaw S.L."/>
            <person name="Steglich C."/>
            <person name="Sullivan M.B."/>
            <person name="Ting C.S."/>
            <person name="Tolonen A."/>
            <person name="Webb E.A."/>
            <person name="Zinser E.R."/>
            <person name="Chisholm S.W."/>
        </authorList>
    </citation>
    <scope>NUCLEOTIDE SEQUENCE [LARGE SCALE GENOMIC DNA]</scope>
    <source>
        <strain>CCMP1986 / NIES-2087 / MED4</strain>
    </source>
</reference>
<feature type="chain" id="PRO_0000368673" description="ATP synthase subunit b">
    <location>
        <begin position="1"/>
        <end position="170"/>
    </location>
</feature>
<feature type="transmembrane region" description="Helical" evidence="1">
    <location>
        <begin position="22"/>
        <end position="41"/>
    </location>
</feature>
<comment type="function">
    <text evidence="1">F(1)F(0) ATP synthase produces ATP from ADP in the presence of a proton or sodium gradient. F-type ATPases consist of two structural domains, F(1) containing the extramembraneous catalytic core and F(0) containing the membrane proton channel, linked together by a central stalk and a peripheral stalk. During catalysis, ATP synthesis in the catalytic domain of F(1) is coupled via a rotary mechanism of the central stalk subunits to proton translocation.</text>
</comment>
<comment type="function">
    <text evidence="1">Component of the F(0) channel, it forms part of the peripheral stalk, linking F(1) to F(0).</text>
</comment>
<comment type="subunit">
    <text evidence="1">F-type ATPases have 2 components, F(1) - the catalytic core - and F(0) - the membrane proton channel. F(1) has five subunits: alpha(3), beta(3), gamma(1), delta(1), epsilon(1). F(0) has four main subunits: a(1), b(1), b'(1) and c(10-14). The alpha and beta chains form an alternating ring which encloses part of the gamma chain. F(1) is attached to F(0) by a central stalk formed by the gamma and epsilon chains, while a peripheral stalk is formed by the delta, b and b' chains.</text>
</comment>
<comment type="subcellular location">
    <subcellularLocation>
        <location evidence="1">Cellular thylakoid membrane</location>
        <topology evidence="1">Single-pass membrane protein</topology>
    </subcellularLocation>
</comment>
<comment type="similarity">
    <text evidence="1">Belongs to the ATPase B chain family.</text>
</comment>
<protein>
    <recommendedName>
        <fullName evidence="1">ATP synthase subunit b</fullName>
    </recommendedName>
    <alternativeName>
        <fullName evidence="1">ATP synthase F(0) sector subunit b</fullName>
    </alternativeName>
    <alternativeName>
        <fullName evidence="1">ATPase subunit I</fullName>
    </alternativeName>
    <alternativeName>
        <fullName evidence="1">F-type ATPase subunit b</fullName>
        <shortName evidence="1">F-ATPase subunit b</shortName>
    </alternativeName>
</protein>
<keyword id="KW-0066">ATP synthesis</keyword>
<keyword id="KW-0138">CF(0)</keyword>
<keyword id="KW-0375">Hydrogen ion transport</keyword>
<keyword id="KW-0406">Ion transport</keyword>
<keyword id="KW-0472">Membrane</keyword>
<keyword id="KW-0793">Thylakoid</keyword>
<keyword id="KW-0812">Transmembrane</keyword>
<keyword id="KW-1133">Transmembrane helix</keyword>
<keyword id="KW-0813">Transport</keyword>
<accession>Q7V035</accession>
<sequence length="170" mass="19048">MNLPLLATEGFGLNLNLFETNVLNWAVVVFGLYKFLPGFLGKMLQKRREGILLELKDAEDRLLKATQALEKAKTDLSLAEEKAGQIKADSLKRSESIRMESEKKAIEEMARIKQSAISDESSEASRAISQLRKEAVELAIKKALDSLPNRLDQTTQENLVTQSINNIEMN</sequence>
<dbReference type="EMBL" id="BX548174">
    <property type="protein sequence ID" value="CAE19912.1"/>
    <property type="molecule type" value="Genomic_DNA"/>
</dbReference>
<dbReference type="RefSeq" id="WP_011133082.1">
    <property type="nucleotide sequence ID" value="NC_005072.1"/>
</dbReference>
<dbReference type="SMR" id="Q7V035"/>
<dbReference type="STRING" id="59919.PMM1453"/>
<dbReference type="KEGG" id="pmm:PMM1453"/>
<dbReference type="eggNOG" id="COG0711">
    <property type="taxonomic scope" value="Bacteria"/>
</dbReference>
<dbReference type="HOGENOM" id="CLU_079215_8_1_3"/>
<dbReference type="OrthoDB" id="461217at2"/>
<dbReference type="Proteomes" id="UP000001026">
    <property type="component" value="Chromosome"/>
</dbReference>
<dbReference type="GO" id="GO:0031676">
    <property type="term" value="C:plasma membrane-derived thylakoid membrane"/>
    <property type="evidence" value="ECO:0007669"/>
    <property type="project" value="UniProtKB-SubCell"/>
</dbReference>
<dbReference type="GO" id="GO:0045259">
    <property type="term" value="C:proton-transporting ATP synthase complex"/>
    <property type="evidence" value="ECO:0007669"/>
    <property type="project" value="UniProtKB-KW"/>
</dbReference>
<dbReference type="GO" id="GO:0046933">
    <property type="term" value="F:proton-transporting ATP synthase activity, rotational mechanism"/>
    <property type="evidence" value="ECO:0007669"/>
    <property type="project" value="UniProtKB-UniRule"/>
</dbReference>
<dbReference type="CDD" id="cd06503">
    <property type="entry name" value="ATP-synt_Fo_b"/>
    <property type="match status" value="1"/>
</dbReference>
<dbReference type="HAMAP" id="MF_01398">
    <property type="entry name" value="ATP_synth_b_bprime"/>
    <property type="match status" value="1"/>
</dbReference>
<dbReference type="InterPro" id="IPR002146">
    <property type="entry name" value="ATP_synth_b/b'su_bac/chlpt"/>
</dbReference>
<dbReference type="NCBIfam" id="NF005606">
    <property type="entry name" value="PRK07352.1"/>
    <property type="match status" value="1"/>
</dbReference>
<dbReference type="PANTHER" id="PTHR34264">
    <property type="entry name" value="ATP SYNTHASE SUBUNIT B, CHLOROPLASTIC"/>
    <property type="match status" value="1"/>
</dbReference>
<dbReference type="PANTHER" id="PTHR34264:SF3">
    <property type="entry name" value="ATP SYNTHASE SUBUNIT B, CHLOROPLASTIC"/>
    <property type="match status" value="1"/>
</dbReference>
<dbReference type="Pfam" id="PF00430">
    <property type="entry name" value="ATP-synt_B"/>
    <property type="match status" value="1"/>
</dbReference>
<organism>
    <name type="scientific">Prochlorococcus marinus subsp. pastoris (strain CCMP1986 / NIES-2087 / MED4)</name>
    <dbReference type="NCBI Taxonomy" id="59919"/>
    <lineage>
        <taxon>Bacteria</taxon>
        <taxon>Bacillati</taxon>
        <taxon>Cyanobacteriota</taxon>
        <taxon>Cyanophyceae</taxon>
        <taxon>Synechococcales</taxon>
        <taxon>Prochlorococcaceae</taxon>
        <taxon>Prochlorococcus</taxon>
    </lineage>
</organism>
<proteinExistence type="inferred from homology"/>